<keyword id="KW-0060">Ascorbate biosynthesis</keyword>
<keyword id="KW-0963">Cytoplasm</keyword>
<keyword id="KW-0344">Guanine-nucleotide releasing factor</keyword>
<keyword id="KW-0378">Hydrolase</keyword>
<keyword id="KW-0547">Nucleotide-binding</keyword>
<keyword id="KW-0548">Nucleotidyltransferase</keyword>
<keyword id="KW-0539">Nucleus</keyword>
<keyword id="KW-1185">Reference proteome</keyword>
<keyword id="KW-0808">Transferase</keyword>
<feature type="chain" id="PRO_0000402542" description="GDP-L-galactose phosphorylase 2">
    <location>
        <begin position="1"/>
        <end position="431"/>
    </location>
</feature>
<feature type="region of interest" description="Disordered" evidence="2">
    <location>
        <begin position="398"/>
        <end position="417"/>
    </location>
</feature>
<feature type="compositionally biased region" description="Acidic residues" evidence="2">
    <location>
        <begin position="398"/>
        <end position="407"/>
    </location>
</feature>
<feature type="active site" description="Tele-GMP-histidine intermediate" evidence="1">
    <location>
        <position position="235"/>
    </location>
</feature>
<accession>Q9FLP9</accession>
<comment type="function">
    <text evidence="4 5 7">Catalyzes a reaction of the Smirnoff-Wheeler pathway, the major route to ascorbate biosynthesis in plants. Acts as a phosphorylase rather than as a transferase. Uses preferentially GDP-L-galactose and GDP-D-glucose as substrates. Lower activity with GDP-L-fucose, very low activity with GDP-D-mannose, and no activity with UDP-D-glucose, UDP-D-galactose or ADP-D-glucose. Highly specific for inorganic phosphate as the guanylyl acceptor.</text>
</comment>
<comment type="catalytic activity">
    <reaction evidence="7">
        <text>GDP-beta-L-galactose + phosphate = beta-L-galactose 1-phosphate + GDP + H(+)</text>
        <dbReference type="Rhea" id="RHEA:27698"/>
        <dbReference type="ChEBI" id="CHEBI:15378"/>
        <dbReference type="ChEBI" id="CHEBI:43474"/>
        <dbReference type="ChEBI" id="CHEBI:58189"/>
        <dbReference type="ChEBI" id="CHEBI:61454"/>
        <dbReference type="ChEBI" id="CHEBI:75522"/>
        <dbReference type="EC" id="2.7.7.69"/>
    </reaction>
</comment>
<comment type="biophysicochemical properties">
    <kinetics>
        <KM evidence="7">0.0083 mM for GDP-L-galactose</KM>
        <KM evidence="5">0.667 mM for GDP-L-galactose</KM>
        <KM evidence="7">0.012 mM for GDP-D-glucose</KM>
        <KM evidence="7">1.3 mM for GDP-D-mannose</KM>
        <KM evidence="7">1 mM for phosphate (in the presence of GDP-L-galactose)</KM>
        <KM evidence="7">0.22 mM for phosphate (in the presence of GDP-D-glucose)</KM>
        <KM evidence="5">0.13 mM for phosphate</KM>
        <KM evidence="7">16 mM for L-galactose 1-phosphate</KM>
        <KM evidence="7">10 mM for D-glucose 1-phosphate</KM>
    </kinetics>
</comment>
<comment type="pathway">
    <text>Cofactor biosynthesis; L-ascorbate biosynthesis via GDP-alpha-D-mannose pathway; L-ascorbate from GDP-alpha-D-mannose: step 2/5.</text>
</comment>
<comment type="subunit">
    <text evidence="6">Interacts with TLP1.</text>
</comment>
<comment type="subcellular location">
    <subcellularLocation>
        <location>Cytoplasm</location>
    </subcellularLocation>
    <subcellularLocation>
        <location evidence="1">Nucleus</location>
    </subcellularLocation>
</comment>
<comment type="tissue specificity">
    <text evidence="5">Expressed in leaves, stems, roots, flowers and siliques.</text>
</comment>
<comment type="induction">
    <text evidence="3 5">By jasmonate, ozone and high light. Circadian-regulation, with a peak in expression at the beginning of the light cycle.</text>
</comment>
<comment type="disruption phenotype">
    <text evidence="5">No visible phenotype and slightly decreased ascorbate levels; due to the partial redundancy with VTC2. Vtc2 and vtc5 double mutants show growth arrest immediately upon germination and are not viable.</text>
</comment>
<comment type="similarity">
    <text evidence="8">Belongs to the GDPGP1 family.</text>
</comment>
<proteinExistence type="evidence at protein level"/>
<name>GGAP2_ARATH</name>
<gene>
    <name type="primary">VTC5</name>
    <name type="synonym">VTC2L</name>
    <name type="ordered locus">At5g55120</name>
    <name type="ORF">MCO15.7</name>
</gene>
<organism>
    <name type="scientific">Arabidopsis thaliana</name>
    <name type="common">Mouse-ear cress</name>
    <dbReference type="NCBI Taxonomy" id="3702"/>
    <lineage>
        <taxon>Eukaryota</taxon>
        <taxon>Viridiplantae</taxon>
        <taxon>Streptophyta</taxon>
        <taxon>Embryophyta</taxon>
        <taxon>Tracheophyta</taxon>
        <taxon>Spermatophyta</taxon>
        <taxon>Magnoliopsida</taxon>
        <taxon>eudicotyledons</taxon>
        <taxon>Gunneridae</taxon>
        <taxon>Pentapetalae</taxon>
        <taxon>rosids</taxon>
        <taxon>malvids</taxon>
        <taxon>Brassicales</taxon>
        <taxon>Brassicaceae</taxon>
        <taxon>Camelineae</taxon>
        <taxon>Arabidopsis</taxon>
    </lineage>
</organism>
<protein>
    <recommendedName>
        <fullName>GDP-L-galactose phosphorylase 2</fullName>
        <ecNumber>2.7.7.69</ecNumber>
    </recommendedName>
    <alternativeName>
        <fullName>Protein VITAMIN C DEFECTIVE 5</fullName>
    </alternativeName>
</protein>
<sequence length="431" mass="48316">MLLKIKRVPTVVSNYQKDETVEEGGCGRNCLSKCCINGARLPLYTCKNLDKSVGENTESPVTFLESLVIGEWEDRFQRGLFRYDVTACETKVIPGKYGFIAQLNEGRHLKKRPTEFRVDKVLQPFDGNKFNFTKVGQEELLFQFKASTNDDDSEIQFLASMPLDADNSPSVVAINVSPIEYGHVLLIPRVLDCLPQRIDHKSLLLALQMAAEADNPYFRLGYNSLGAFATINHLHFQAYYLAMQFPIEKASSLKITTTNNGVKISKLLNYPVRGLLVEGGNTIKDLADTVSDASVCLQNNNIPFNILISDSGKRIFLLPQCYAEKQALGEVSSTLLDTQVNPAVWEMSGHMVLKRKEDYEGASEEKAWRLLAEVSLSEERFREVNTMIFDAIGFSSHEEEEEEELEEQNSMNGGSFTIVHCPSVKEEAVSN</sequence>
<evidence type="ECO:0000250" key="1"/>
<evidence type="ECO:0000256" key="2">
    <source>
        <dbReference type="SAM" id="MobiDB-lite"/>
    </source>
</evidence>
<evidence type="ECO:0000269" key="3">
    <source>
    </source>
</evidence>
<evidence type="ECO:0000269" key="4">
    <source>
    </source>
</evidence>
<evidence type="ECO:0000269" key="5">
    <source>
    </source>
</evidence>
<evidence type="ECO:0000269" key="6">
    <source>
    </source>
</evidence>
<evidence type="ECO:0000269" key="7">
    <source>
    </source>
</evidence>
<evidence type="ECO:0000305" key="8"/>
<reference key="1">
    <citation type="journal article" date="1998" name="DNA Res.">
        <title>Structural analysis of Arabidopsis thaliana chromosome 5. IV. Sequence features of the regions of 1,456,315 bp covered by nineteen physically assigned P1 and TAC clones.</title>
        <authorList>
            <person name="Sato S."/>
            <person name="Kaneko T."/>
            <person name="Kotani H."/>
            <person name="Nakamura Y."/>
            <person name="Asamizu E."/>
            <person name="Miyajima N."/>
            <person name="Tabata S."/>
        </authorList>
    </citation>
    <scope>NUCLEOTIDE SEQUENCE [LARGE SCALE GENOMIC DNA]</scope>
    <source>
        <strain>cv. Columbia</strain>
    </source>
</reference>
<reference key="2">
    <citation type="journal article" date="2017" name="Plant J.">
        <title>Araport11: a complete reannotation of the Arabidopsis thaliana reference genome.</title>
        <authorList>
            <person name="Cheng C.Y."/>
            <person name="Krishnakumar V."/>
            <person name="Chan A.P."/>
            <person name="Thibaud-Nissen F."/>
            <person name="Schobel S."/>
            <person name="Town C.D."/>
        </authorList>
    </citation>
    <scope>GENOME REANNOTATION</scope>
    <source>
        <strain>cv. Columbia</strain>
    </source>
</reference>
<reference key="3">
    <citation type="journal article" date="2003" name="Science">
        <title>Empirical analysis of transcriptional activity in the Arabidopsis genome.</title>
        <authorList>
            <person name="Yamada K."/>
            <person name="Lim J."/>
            <person name="Dale J.M."/>
            <person name="Chen H."/>
            <person name="Shinn P."/>
            <person name="Palm C.J."/>
            <person name="Southwick A.M."/>
            <person name="Wu H.C."/>
            <person name="Kim C.J."/>
            <person name="Nguyen M."/>
            <person name="Pham P.K."/>
            <person name="Cheuk R.F."/>
            <person name="Karlin-Newmann G."/>
            <person name="Liu S.X."/>
            <person name="Lam B."/>
            <person name="Sakano H."/>
            <person name="Wu T."/>
            <person name="Yu G."/>
            <person name="Miranda M."/>
            <person name="Quach H.L."/>
            <person name="Tripp M."/>
            <person name="Chang C.H."/>
            <person name="Lee J.M."/>
            <person name="Toriumi M.J."/>
            <person name="Chan M.M."/>
            <person name="Tang C.C."/>
            <person name="Onodera C.S."/>
            <person name="Deng J.M."/>
            <person name="Akiyama K."/>
            <person name="Ansari Y."/>
            <person name="Arakawa T."/>
            <person name="Banh J."/>
            <person name="Banno F."/>
            <person name="Bowser L."/>
            <person name="Brooks S.Y."/>
            <person name="Carninci P."/>
            <person name="Chao Q."/>
            <person name="Choy N."/>
            <person name="Enju A."/>
            <person name="Goldsmith A.D."/>
            <person name="Gurjal M."/>
            <person name="Hansen N.F."/>
            <person name="Hayashizaki Y."/>
            <person name="Johnson-Hopson C."/>
            <person name="Hsuan V.W."/>
            <person name="Iida K."/>
            <person name="Karnes M."/>
            <person name="Khan S."/>
            <person name="Koesema E."/>
            <person name="Ishida J."/>
            <person name="Jiang P.X."/>
            <person name="Jones T."/>
            <person name="Kawai J."/>
            <person name="Kamiya A."/>
            <person name="Meyers C."/>
            <person name="Nakajima M."/>
            <person name="Narusaka M."/>
            <person name="Seki M."/>
            <person name="Sakurai T."/>
            <person name="Satou M."/>
            <person name="Tamse R."/>
            <person name="Vaysberg M."/>
            <person name="Wallender E.K."/>
            <person name="Wong C."/>
            <person name="Yamamura Y."/>
            <person name="Yuan S."/>
            <person name="Shinozaki K."/>
            <person name="Davis R.W."/>
            <person name="Theologis A."/>
            <person name="Ecker J.R."/>
        </authorList>
    </citation>
    <scope>NUCLEOTIDE SEQUENCE [LARGE SCALE MRNA]</scope>
    <source>
        <strain>cv. Columbia</strain>
    </source>
</reference>
<reference key="4">
    <citation type="journal article" date="2005" name="Plant J.">
        <title>Coordinated activation of metabolic pathways for antioxidants and defence compounds by jasmonates and their roles in stress tolerance in Arabidopsis.</title>
        <authorList>
            <person name="Sasaki-Sekimoto Y."/>
            <person name="Taki N."/>
            <person name="Obayashi T."/>
            <person name="Aono M."/>
            <person name="Matsumoto F."/>
            <person name="Sakurai N."/>
            <person name="Suzuki H."/>
            <person name="Hirai M.Y."/>
            <person name="Noji M."/>
            <person name="Saito K."/>
            <person name="Masuda T."/>
            <person name="Takamiya K."/>
            <person name="Shibata D."/>
            <person name="Ohta H."/>
        </authorList>
    </citation>
    <scope>INDUCTION BY JASMONATE AND OZONE</scope>
</reference>
<reference key="5">
    <citation type="journal article" date="2007" name="Plant J.">
        <title>Two genes in Arabidopsis thaliana encoding GDP-L-galactose phosphorylase are required for ascorbate biosynthesis and seedling viability.</title>
        <authorList>
            <person name="Dowdle J."/>
            <person name="Ishikawa T."/>
            <person name="Gatzek S."/>
            <person name="Rolinski S."/>
            <person name="Smirnoff N."/>
        </authorList>
    </citation>
    <scope>FUNCTION</scope>
    <scope>INDUCTION BY LIGHT</scope>
    <scope>DISRUPTION PHENOTYPE</scope>
    <scope>TISSUE SPECIFICITY</scope>
    <scope>BIOPHYSICOCHEMICAL PROPERTIES</scope>
</reference>
<reference key="6">
    <citation type="journal article" date="2007" name="Proc. Natl. Acad. Sci. U.S.A.">
        <title>The missing step of the L-galactose pathway of ascorbate biosynthesis in plants, an L-galactose guanyltransferase, increases leaf ascorbate content.</title>
        <authorList>
            <person name="Laing W.A."/>
            <person name="Wright M.A."/>
            <person name="Cooney J."/>
            <person name="Bulley S.M."/>
        </authorList>
    </citation>
    <scope>IDENTIFICATION</scope>
    <scope>FUNCTION</scope>
</reference>
<reference key="7">
    <citation type="journal article" date="2008" name="J. Biol. Chem.">
        <title>A second GDP-L-galactose phosphorylase in arabidopsis en route to vitamin C. Covalent intermediate and substrate requirements for the conserved reaction.</title>
        <authorList>
            <person name="Linster C.L."/>
            <person name="Adler L.N."/>
            <person name="Webb K."/>
            <person name="Christensen K.C."/>
            <person name="Brenner C."/>
            <person name="Clarke S.G."/>
        </authorList>
    </citation>
    <scope>FUNCTION</scope>
    <scope>CATALYTIC ACTIVITY</scope>
    <scope>BIOPHYSICOCHEMICAL PROPERTIES</scope>
</reference>
<reference key="8">
    <citation type="journal article" date="2008" name="J. Plant Res.">
        <title>Blue light diminishes interaction of PAS/LOV proteins, putative blue light receptors in Arabidopsis thaliana, with their interacting partners.</title>
        <authorList>
            <person name="Ogura Y."/>
            <person name="Komatsu A."/>
            <person name="Zikihara K."/>
            <person name="Nanjo T."/>
            <person name="Tokutomi S."/>
            <person name="Wada M."/>
            <person name="Kiyosue T."/>
        </authorList>
    </citation>
    <scope>INTERACTION WITH TLP1</scope>
</reference>
<dbReference type="EC" id="2.7.7.69"/>
<dbReference type="EMBL" id="AB010071">
    <property type="protein sequence ID" value="BAB08581.1"/>
    <property type="molecule type" value="Genomic_DNA"/>
</dbReference>
<dbReference type="EMBL" id="CP002688">
    <property type="protein sequence ID" value="AED96583.1"/>
    <property type="molecule type" value="Genomic_DNA"/>
</dbReference>
<dbReference type="EMBL" id="AY063788">
    <property type="protein sequence ID" value="AAL36095.1"/>
    <property type="molecule type" value="mRNA"/>
</dbReference>
<dbReference type="EMBL" id="AY091285">
    <property type="protein sequence ID" value="AAM14224.1"/>
    <property type="molecule type" value="mRNA"/>
</dbReference>
<dbReference type="RefSeq" id="NP_200323.1">
    <property type="nucleotide sequence ID" value="NM_124894.5"/>
</dbReference>
<dbReference type="BioGRID" id="20847">
    <property type="interactions" value="1"/>
</dbReference>
<dbReference type="FunCoup" id="Q9FLP9">
    <property type="interactions" value="2144"/>
</dbReference>
<dbReference type="IntAct" id="Q9FLP9">
    <property type="interactions" value="1"/>
</dbReference>
<dbReference type="STRING" id="3702.Q9FLP9"/>
<dbReference type="PaxDb" id="3702-AT5G55120.1"/>
<dbReference type="ProteomicsDB" id="221834"/>
<dbReference type="EnsemblPlants" id="AT5G55120.1">
    <property type="protein sequence ID" value="AT5G55120.1"/>
    <property type="gene ID" value="AT5G55120"/>
</dbReference>
<dbReference type="GeneID" id="835603"/>
<dbReference type="Gramene" id="AT5G55120.1">
    <property type="protein sequence ID" value="AT5G55120.1"/>
    <property type="gene ID" value="AT5G55120"/>
</dbReference>
<dbReference type="KEGG" id="ath:AT5G55120"/>
<dbReference type="Araport" id="AT5G55120"/>
<dbReference type="TAIR" id="AT5G55120">
    <property type="gene designation" value="VTC5"/>
</dbReference>
<dbReference type="eggNOG" id="KOG2720">
    <property type="taxonomic scope" value="Eukaryota"/>
</dbReference>
<dbReference type="HOGENOM" id="CLU_041964_1_0_1"/>
<dbReference type="InParanoid" id="Q9FLP9"/>
<dbReference type="OMA" id="ACICLQI"/>
<dbReference type="OrthoDB" id="417175at2759"/>
<dbReference type="PhylomeDB" id="Q9FLP9"/>
<dbReference type="BioCyc" id="MetaCyc:AT5G55120-MONOMER"/>
<dbReference type="BRENDA" id="2.7.7.69">
    <property type="organism ID" value="399"/>
</dbReference>
<dbReference type="SABIO-RK" id="Q9FLP9"/>
<dbReference type="UniPathway" id="UPA00990">
    <property type="reaction ID" value="UER00932"/>
</dbReference>
<dbReference type="PRO" id="PR:Q9FLP9"/>
<dbReference type="Proteomes" id="UP000006548">
    <property type="component" value="Chromosome 5"/>
</dbReference>
<dbReference type="ExpressionAtlas" id="Q9FLP9">
    <property type="expression patterns" value="baseline and differential"/>
</dbReference>
<dbReference type="GO" id="GO:0005737">
    <property type="term" value="C:cytoplasm"/>
    <property type="evidence" value="ECO:0007669"/>
    <property type="project" value="UniProtKB-SubCell"/>
</dbReference>
<dbReference type="GO" id="GO:0005634">
    <property type="term" value="C:nucleus"/>
    <property type="evidence" value="ECO:0007669"/>
    <property type="project" value="UniProtKB-SubCell"/>
</dbReference>
<dbReference type="GO" id="GO:0080048">
    <property type="term" value="F:GDP-D-glucose phosphorylase activity"/>
    <property type="evidence" value="ECO:0000314"/>
    <property type="project" value="TAIR"/>
</dbReference>
<dbReference type="GO" id="GO:0080047">
    <property type="term" value="F:GDP-L-galactose phosphorylase activity"/>
    <property type="evidence" value="ECO:0007669"/>
    <property type="project" value="UniProtKB-EC"/>
</dbReference>
<dbReference type="GO" id="GO:0005085">
    <property type="term" value="F:guanyl-nucleotide exchange factor activity"/>
    <property type="evidence" value="ECO:0007669"/>
    <property type="project" value="UniProtKB-KW"/>
</dbReference>
<dbReference type="GO" id="GO:0016787">
    <property type="term" value="F:hydrolase activity"/>
    <property type="evidence" value="ECO:0007669"/>
    <property type="project" value="UniProtKB-KW"/>
</dbReference>
<dbReference type="GO" id="GO:0000166">
    <property type="term" value="F:nucleotide binding"/>
    <property type="evidence" value="ECO:0007669"/>
    <property type="project" value="UniProtKB-KW"/>
</dbReference>
<dbReference type="GO" id="GO:0080046">
    <property type="term" value="F:quercetin 4'-O-glucosyltransferase activity"/>
    <property type="evidence" value="ECO:0000314"/>
    <property type="project" value="TAIR"/>
</dbReference>
<dbReference type="GO" id="GO:0019853">
    <property type="term" value="P:L-ascorbic acid biosynthetic process"/>
    <property type="evidence" value="ECO:0000315"/>
    <property type="project" value="TAIR"/>
</dbReference>
<dbReference type="GO" id="GO:0009753">
    <property type="term" value="P:response to jasmonic acid"/>
    <property type="evidence" value="ECO:0000270"/>
    <property type="project" value="TAIR"/>
</dbReference>
<dbReference type="GO" id="GO:0010193">
    <property type="term" value="P:response to ozone"/>
    <property type="evidence" value="ECO:0000270"/>
    <property type="project" value="TAIR"/>
</dbReference>
<dbReference type="InterPro" id="IPR026506">
    <property type="entry name" value="GDPGP"/>
</dbReference>
<dbReference type="PANTHER" id="PTHR20884">
    <property type="entry name" value="GDP-D-GLUCOSE PHOSPHORYLASE 1"/>
    <property type="match status" value="1"/>
</dbReference>
<dbReference type="PANTHER" id="PTHR20884:SF17">
    <property type="entry name" value="GDP-L-GALACTOSE PHOSPHORYLASE 2"/>
    <property type="match status" value="1"/>
</dbReference>